<protein>
    <recommendedName>
        <fullName evidence="1">Phosphoheptose isomerase</fullName>
        <ecNumber evidence="1">5.3.1.28</ecNumber>
    </recommendedName>
    <alternativeName>
        <fullName evidence="1">Sedoheptulose 7-phosphate isomerase</fullName>
    </alternativeName>
</protein>
<evidence type="ECO:0000255" key="1">
    <source>
        <dbReference type="HAMAP-Rule" id="MF_00067"/>
    </source>
</evidence>
<sequence>MYQDLIRNELNEAAETLANFLKDDANIHAIQRAAVLLADSFKAGGKVLSCGNGGSHCDAMHFAEELTGRYRENRPGYPAIAISDVSHISCVSNDFGYDYIFSRYVEAVGREGDVLLGISTSGNSGNVIKAIAAAREKGMKVITLTGKDGGKMAGTADIEIRVPHFGYADRIQEIHIKVIHILIQLIEKEMVK</sequence>
<name>GMHA_SALPB</name>
<keyword id="KW-0119">Carbohydrate metabolism</keyword>
<keyword id="KW-0963">Cytoplasm</keyword>
<keyword id="KW-0413">Isomerase</keyword>
<keyword id="KW-0479">Metal-binding</keyword>
<keyword id="KW-0862">Zinc</keyword>
<proteinExistence type="inferred from homology"/>
<reference key="1">
    <citation type="submission" date="2007-11" db="EMBL/GenBank/DDBJ databases">
        <authorList>
            <consortium name="The Salmonella enterica serovar Paratyphi B Genome Sequencing Project"/>
            <person name="McClelland M."/>
            <person name="Sanderson E.K."/>
            <person name="Porwollik S."/>
            <person name="Spieth J."/>
            <person name="Clifton W.S."/>
            <person name="Fulton R."/>
            <person name="Cordes M."/>
            <person name="Wollam A."/>
            <person name="Shah N."/>
            <person name="Pepin K."/>
            <person name="Bhonagiri V."/>
            <person name="Nash W."/>
            <person name="Johnson M."/>
            <person name="Thiruvilangam P."/>
            <person name="Wilson R."/>
        </authorList>
    </citation>
    <scope>NUCLEOTIDE SEQUENCE [LARGE SCALE GENOMIC DNA]</scope>
    <source>
        <strain>ATCC BAA-1250 / SPB7</strain>
    </source>
</reference>
<gene>
    <name evidence="1" type="primary">gmhA</name>
    <name type="ordered locus">SPAB_03292</name>
</gene>
<dbReference type="EC" id="5.3.1.28" evidence="1"/>
<dbReference type="EMBL" id="CP000886">
    <property type="protein sequence ID" value="ABX68652.1"/>
    <property type="molecule type" value="Genomic_DNA"/>
</dbReference>
<dbReference type="SMR" id="A9MY16"/>
<dbReference type="KEGG" id="spq:SPAB_03292"/>
<dbReference type="PATRIC" id="fig|1016998.12.peg.3110"/>
<dbReference type="HOGENOM" id="CLU_080999_4_0_6"/>
<dbReference type="BioCyc" id="SENT1016998:SPAB_RS13470-MONOMER"/>
<dbReference type="UniPathway" id="UPA00041">
    <property type="reaction ID" value="UER00436"/>
</dbReference>
<dbReference type="Proteomes" id="UP000008556">
    <property type="component" value="Chromosome"/>
</dbReference>
<dbReference type="GO" id="GO:0005737">
    <property type="term" value="C:cytoplasm"/>
    <property type="evidence" value="ECO:0007669"/>
    <property type="project" value="UniProtKB-SubCell"/>
</dbReference>
<dbReference type="GO" id="GO:0097367">
    <property type="term" value="F:carbohydrate derivative binding"/>
    <property type="evidence" value="ECO:0007669"/>
    <property type="project" value="InterPro"/>
</dbReference>
<dbReference type="GO" id="GO:0008968">
    <property type="term" value="F:D-sedoheptulose 7-phosphate isomerase activity"/>
    <property type="evidence" value="ECO:0007669"/>
    <property type="project" value="UniProtKB-UniRule"/>
</dbReference>
<dbReference type="GO" id="GO:0008270">
    <property type="term" value="F:zinc ion binding"/>
    <property type="evidence" value="ECO:0007669"/>
    <property type="project" value="UniProtKB-UniRule"/>
</dbReference>
<dbReference type="GO" id="GO:0005975">
    <property type="term" value="P:carbohydrate metabolic process"/>
    <property type="evidence" value="ECO:0007669"/>
    <property type="project" value="UniProtKB-UniRule"/>
</dbReference>
<dbReference type="GO" id="GO:2001061">
    <property type="term" value="P:D-glycero-D-manno-heptose 7-phosphate biosynthetic process"/>
    <property type="evidence" value="ECO:0007669"/>
    <property type="project" value="UniProtKB-UniPathway"/>
</dbReference>
<dbReference type="CDD" id="cd05006">
    <property type="entry name" value="SIS_GmhA"/>
    <property type="match status" value="1"/>
</dbReference>
<dbReference type="FunFam" id="3.40.50.10490:FF:000013">
    <property type="entry name" value="Phosphoheptose isomerase"/>
    <property type="match status" value="1"/>
</dbReference>
<dbReference type="Gene3D" id="3.40.50.10490">
    <property type="entry name" value="Glucose-6-phosphate isomerase like protein, domain 1"/>
    <property type="match status" value="1"/>
</dbReference>
<dbReference type="HAMAP" id="MF_00067">
    <property type="entry name" value="GmhA"/>
    <property type="match status" value="1"/>
</dbReference>
<dbReference type="InterPro" id="IPR035461">
    <property type="entry name" value="GmhA/DiaA"/>
</dbReference>
<dbReference type="InterPro" id="IPR004515">
    <property type="entry name" value="Phosphoheptose_Isoase"/>
</dbReference>
<dbReference type="InterPro" id="IPR001347">
    <property type="entry name" value="SIS_dom"/>
</dbReference>
<dbReference type="InterPro" id="IPR046348">
    <property type="entry name" value="SIS_dom_sf"/>
</dbReference>
<dbReference type="InterPro" id="IPR050099">
    <property type="entry name" value="SIS_GmhA/DiaA_subfam"/>
</dbReference>
<dbReference type="NCBIfam" id="TIGR00441">
    <property type="entry name" value="gmhA"/>
    <property type="match status" value="1"/>
</dbReference>
<dbReference type="NCBIfam" id="NF001628">
    <property type="entry name" value="PRK00414.1"/>
    <property type="match status" value="1"/>
</dbReference>
<dbReference type="PANTHER" id="PTHR30390:SF7">
    <property type="entry name" value="PHOSPHOHEPTOSE ISOMERASE"/>
    <property type="match status" value="1"/>
</dbReference>
<dbReference type="PANTHER" id="PTHR30390">
    <property type="entry name" value="SEDOHEPTULOSE 7-PHOSPHATE ISOMERASE / DNAA INITIATOR-ASSOCIATING FACTOR FOR REPLICATION INITIATION"/>
    <property type="match status" value="1"/>
</dbReference>
<dbReference type="Pfam" id="PF13580">
    <property type="entry name" value="SIS_2"/>
    <property type="match status" value="1"/>
</dbReference>
<dbReference type="SUPFAM" id="SSF53697">
    <property type="entry name" value="SIS domain"/>
    <property type="match status" value="1"/>
</dbReference>
<dbReference type="PROSITE" id="PS51464">
    <property type="entry name" value="SIS"/>
    <property type="match status" value="1"/>
</dbReference>
<organism>
    <name type="scientific">Salmonella paratyphi B (strain ATCC BAA-1250 / SPB7)</name>
    <dbReference type="NCBI Taxonomy" id="1016998"/>
    <lineage>
        <taxon>Bacteria</taxon>
        <taxon>Pseudomonadati</taxon>
        <taxon>Pseudomonadota</taxon>
        <taxon>Gammaproteobacteria</taxon>
        <taxon>Enterobacterales</taxon>
        <taxon>Enterobacteriaceae</taxon>
        <taxon>Salmonella</taxon>
    </lineage>
</organism>
<accession>A9MY16</accession>
<comment type="function">
    <text evidence="1">Catalyzes the isomerization of sedoheptulose 7-phosphate in D-glycero-D-manno-heptose 7-phosphate.</text>
</comment>
<comment type="catalytic activity">
    <reaction evidence="1">
        <text>2 D-sedoheptulose 7-phosphate = D-glycero-alpha-D-manno-heptose 7-phosphate + D-glycero-beta-D-manno-heptose 7-phosphate</text>
        <dbReference type="Rhea" id="RHEA:27489"/>
        <dbReference type="ChEBI" id="CHEBI:57483"/>
        <dbReference type="ChEBI" id="CHEBI:60203"/>
        <dbReference type="ChEBI" id="CHEBI:60204"/>
        <dbReference type="EC" id="5.3.1.28"/>
    </reaction>
</comment>
<comment type="cofactor">
    <cofactor evidence="1">
        <name>Zn(2+)</name>
        <dbReference type="ChEBI" id="CHEBI:29105"/>
    </cofactor>
    <text evidence="1">Binds 1 zinc ion per subunit.</text>
</comment>
<comment type="pathway">
    <text evidence="1">Carbohydrate biosynthesis; D-glycero-D-manno-heptose 7-phosphate biosynthesis; D-glycero-alpha-D-manno-heptose 7-phosphate and D-glycero-beta-D-manno-heptose 7-phosphate from sedoheptulose 7-phosphate: step 1/1.</text>
</comment>
<comment type="subunit">
    <text evidence="1">Homotetramer.</text>
</comment>
<comment type="subcellular location">
    <subcellularLocation>
        <location evidence="1">Cytoplasm</location>
    </subcellularLocation>
</comment>
<comment type="miscellaneous">
    <text evidence="1">The reaction produces a racemic mixture of D-glycero-alpha-D-manno-heptose 7-phosphate and D-glycero-beta-D-manno-heptose 7-phosphate.</text>
</comment>
<comment type="similarity">
    <text evidence="1">Belongs to the SIS family. GmhA subfamily.</text>
</comment>
<feature type="chain" id="PRO_1000075103" description="Phosphoheptose isomerase">
    <location>
        <begin position="1"/>
        <end position="192"/>
    </location>
</feature>
<feature type="domain" description="SIS" evidence="1">
    <location>
        <begin position="37"/>
        <end position="192"/>
    </location>
</feature>
<feature type="binding site" evidence="1">
    <location>
        <begin position="52"/>
        <end position="54"/>
    </location>
    <ligand>
        <name>substrate</name>
    </ligand>
</feature>
<feature type="binding site" evidence="1">
    <location>
        <position position="61"/>
    </location>
    <ligand>
        <name>Zn(2+)</name>
        <dbReference type="ChEBI" id="CHEBI:29105"/>
    </ligand>
</feature>
<feature type="binding site" evidence="1">
    <location>
        <position position="65"/>
    </location>
    <ligand>
        <name>substrate</name>
    </ligand>
</feature>
<feature type="binding site" evidence="1">
    <location>
        <position position="65"/>
    </location>
    <ligand>
        <name>Zn(2+)</name>
        <dbReference type="ChEBI" id="CHEBI:29105"/>
    </ligand>
</feature>
<feature type="binding site" evidence="1">
    <location>
        <begin position="93"/>
        <end position="94"/>
    </location>
    <ligand>
        <name>substrate</name>
    </ligand>
</feature>
<feature type="binding site" evidence="1">
    <location>
        <begin position="119"/>
        <end position="121"/>
    </location>
    <ligand>
        <name>substrate</name>
    </ligand>
</feature>
<feature type="binding site" evidence="1">
    <location>
        <position position="124"/>
    </location>
    <ligand>
        <name>substrate</name>
    </ligand>
</feature>
<feature type="binding site" evidence="1">
    <location>
        <position position="172"/>
    </location>
    <ligand>
        <name>substrate</name>
    </ligand>
</feature>
<feature type="binding site" evidence="1">
    <location>
        <position position="172"/>
    </location>
    <ligand>
        <name>Zn(2+)</name>
        <dbReference type="ChEBI" id="CHEBI:29105"/>
    </ligand>
</feature>
<feature type="binding site" evidence="1">
    <location>
        <position position="180"/>
    </location>
    <ligand>
        <name>Zn(2+)</name>
        <dbReference type="ChEBI" id="CHEBI:29105"/>
    </ligand>
</feature>